<name>NDK_CROS5</name>
<reference key="1">
    <citation type="journal article" date="2008" name="Proc. Natl. Acad. Sci. U.S.A.">
        <title>The genome of Cyanothece 51142, a unicellular diazotrophic cyanobacterium important in the marine nitrogen cycle.</title>
        <authorList>
            <person name="Welsh E.A."/>
            <person name="Liberton M."/>
            <person name="Stoeckel J."/>
            <person name="Loh T."/>
            <person name="Elvitigala T."/>
            <person name="Wang C."/>
            <person name="Wollam A."/>
            <person name="Fulton R.S."/>
            <person name="Clifton S.W."/>
            <person name="Jacobs J.M."/>
            <person name="Aurora R."/>
            <person name="Ghosh B.K."/>
            <person name="Sherman L.A."/>
            <person name="Smith R.D."/>
            <person name="Wilson R.K."/>
            <person name="Pakrasi H.B."/>
        </authorList>
    </citation>
    <scope>NUCLEOTIDE SEQUENCE [LARGE SCALE GENOMIC DNA]</scope>
    <source>
        <strain>ATCC 51142 / BH68</strain>
    </source>
</reference>
<dbReference type="EC" id="2.7.4.6" evidence="1"/>
<dbReference type="EMBL" id="CP000806">
    <property type="protein sequence ID" value="ACB50039.1"/>
    <property type="molecule type" value="Genomic_DNA"/>
</dbReference>
<dbReference type="RefSeq" id="WP_009545932.1">
    <property type="nucleotide sequence ID" value="NC_010546.1"/>
</dbReference>
<dbReference type="SMR" id="B1WQB7"/>
<dbReference type="STRING" id="43989.cce_0688"/>
<dbReference type="KEGG" id="cyt:cce_0688"/>
<dbReference type="eggNOG" id="COG0105">
    <property type="taxonomic scope" value="Bacteria"/>
</dbReference>
<dbReference type="HOGENOM" id="CLU_060216_6_3_3"/>
<dbReference type="OrthoDB" id="9801161at2"/>
<dbReference type="Proteomes" id="UP000001203">
    <property type="component" value="Chromosome circular"/>
</dbReference>
<dbReference type="GO" id="GO:0005737">
    <property type="term" value="C:cytoplasm"/>
    <property type="evidence" value="ECO:0007669"/>
    <property type="project" value="UniProtKB-SubCell"/>
</dbReference>
<dbReference type="GO" id="GO:0005524">
    <property type="term" value="F:ATP binding"/>
    <property type="evidence" value="ECO:0007669"/>
    <property type="project" value="UniProtKB-UniRule"/>
</dbReference>
<dbReference type="GO" id="GO:0046872">
    <property type="term" value="F:metal ion binding"/>
    <property type="evidence" value="ECO:0007669"/>
    <property type="project" value="UniProtKB-KW"/>
</dbReference>
<dbReference type="GO" id="GO:0004550">
    <property type="term" value="F:nucleoside diphosphate kinase activity"/>
    <property type="evidence" value="ECO:0007669"/>
    <property type="project" value="UniProtKB-UniRule"/>
</dbReference>
<dbReference type="GO" id="GO:0006241">
    <property type="term" value="P:CTP biosynthetic process"/>
    <property type="evidence" value="ECO:0007669"/>
    <property type="project" value="UniProtKB-UniRule"/>
</dbReference>
<dbReference type="GO" id="GO:0006183">
    <property type="term" value="P:GTP biosynthetic process"/>
    <property type="evidence" value="ECO:0007669"/>
    <property type="project" value="UniProtKB-UniRule"/>
</dbReference>
<dbReference type="GO" id="GO:0006228">
    <property type="term" value="P:UTP biosynthetic process"/>
    <property type="evidence" value="ECO:0007669"/>
    <property type="project" value="UniProtKB-UniRule"/>
</dbReference>
<dbReference type="CDD" id="cd04413">
    <property type="entry name" value="NDPk_I"/>
    <property type="match status" value="1"/>
</dbReference>
<dbReference type="FunFam" id="3.30.70.141:FF:000002">
    <property type="entry name" value="Nucleoside diphosphate kinase"/>
    <property type="match status" value="1"/>
</dbReference>
<dbReference type="Gene3D" id="3.30.70.141">
    <property type="entry name" value="Nucleoside diphosphate kinase-like domain"/>
    <property type="match status" value="1"/>
</dbReference>
<dbReference type="HAMAP" id="MF_00451">
    <property type="entry name" value="NDP_kinase"/>
    <property type="match status" value="1"/>
</dbReference>
<dbReference type="InterPro" id="IPR034907">
    <property type="entry name" value="NDK-like_dom"/>
</dbReference>
<dbReference type="InterPro" id="IPR036850">
    <property type="entry name" value="NDK-like_dom_sf"/>
</dbReference>
<dbReference type="InterPro" id="IPR001564">
    <property type="entry name" value="Nucleoside_diP_kinase"/>
</dbReference>
<dbReference type="InterPro" id="IPR023005">
    <property type="entry name" value="Nucleoside_diP_kinase_AS"/>
</dbReference>
<dbReference type="NCBIfam" id="NF001908">
    <property type="entry name" value="PRK00668.1"/>
    <property type="match status" value="1"/>
</dbReference>
<dbReference type="PANTHER" id="PTHR11349">
    <property type="entry name" value="NUCLEOSIDE DIPHOSPHATE KINASE"/>
    <property type="match status" value="1"/>
</dbReference>
<dbReference type="Pfam" id="PF00334">
    <property type="entry name" value="NDK"/>
    <property type="match status" value="1"/>
</dbReference>
<dbReference type="PRINTS" id="PR01243">
    <property type="entry name" value="NUCDPKINASE"/>
</dbReference>
<dbReference type="SMART" id="SM00562">
    <property type="entry name" value="NDK"/>
    <property type="match status" value="1"/>
</dbReference>
<dbReference type="SUPFAM" id="SSF54919">
    <property type="entry name" value="Nucleoside diphosphate kinase, NDK"/>
    <property type="match status" value="1"/>
</dbReference>
<dbReference type="PROSITE" id="PS00469">
    <property type="entry name" value="NDPK"/>
    <property type="match status" value="1"/>
</dbReference>
<dbReference type="PROSITE" id="PS51374">
    <property type="entry name" value="NDPK_LIKE"/>
    <property type="match status" value="1"/>
</dbReference>
<proteinExistence type="inferred from homology"/>
<gene>
    <name evidence="1" type="primary">ndk</name>
    <name type="ordered locus">cce_0688</name>
</gene>
<keyword id="KW-0067">ATP-binding</keyword>
<keyword id="KW-0963">Cytoplasm</keyword>
<keyword id="KW-0418">Kinase</keyword>
<keyword id="KW-0460">Magnesium</keyword>
<keyword id="KW-0479">Metal-binding</keyword>
<keyword id="KW-0546">Nucleotide metabolism</keyword>
<keyword id="KW-0547">Nucleotide-binding</keyword>
<keyword id="KW-0597">Phosphoprotein</keyword>
<keyword id="KW-1185">Reference proteome</keyword>
<keyword id="KW-0808">Transferase</keyword>
<protein>
    <recommendedName>
        <fullName evidence="1">Nucleoside diphosphate kinase</fullName>
        <shortName evidence="1">NDK</shortName>
        <shortName evidence="1">NDP kinase</shortName>
        <ecNumber evidence="1">2.7.4.6</ecNumber>
    </recommendedName>
    <alternativeName>
        <fullName evidence="1">Nucleoside-2-P kinase</fullName>
    </alternativeName>
</protein>
<evidence type="ECO:0000255" key="1">
    <source>
        <dbReference type="HAMAP-Rule" id="MF_00451"/>
    </source>
</evidence>
<accession>B1WQB7</accession>
<sequence length="149" mass="16487">MERTFIMIKPDGVQRGLVGEVIGRFEAKGFTLVGLKLMSVSKELAEEHYDVHKERPFFGSLVEFICSSPVVAMVWEGDGVVASARKLIGATNPLSAEPGTIRGDFGVSVGRNLIHGSDAIETAQREISLWFNEKELSSWEPTAKTWLYE</sequence>
<organism>
    <name type="scientific">Crocosphaera subtropica (strain ATCC 51142 / BH68)</name>
    <name type="common">Cyanothece sp. (strain ATCC 51142)</name>
    <dbReference type="NCBI Taxonomy" id="43989"/>
    <lineage>
        <taxon>Bacteria</taxon>
        <taxon>Bacillati</taxon>
        <taxon>Cyanobacteriota</taxon>
        <taxon>Cyanophyceae</taxon>
        <taxon>Oscillatoriophycideae</taxon>
        <taxon>Chroococcales</taxon>
        <taxon>Aphanothecaceae</taxon>
        <taxon>Crocosphaera</taxon>
        <taxon>Crocosphaera subtropica</taxon>
    </lineage>
</organism>
<comment type="function">
    <text evidence="1">Major role in the synthesis of nucleoside triphosphates other than ATP. The ATP gamma phosphate is transferred to the NDP beta phosphate via a ping-pong mechanism, using a phosphorylated active-site intermediate.</text>
</comment>
<comment type="catalytic activity">
    <reaction evidence="1">
        <text>a 2'-deoxyribonucleoside 5'-diphosphate + ATP = a 2'-deoxyribonucleoside 5'-triphosphate + ADP</text>
        <dbReference type="Rhea" id="RHEA:44640"/>
        <dbReference type="ChEBI" id="CHEBI:30616"/>
        <dbReference type="ChEBI" id="CHEBI:61560"/>
        <dbReference type="ChEBI" id="CHEBI:73316"/>
        <dbReference type="ChEBI" id="CHEBI:456216"/>
        <dbReference type="EC" id="2.7.4.6"/>
    </reaction>
</comment>
<comment type="catalytic activity">
    <reaction evidence="1">
        <text>a ribonucleoside 5'-diphosphate + ATP = a ribonucleoside 5'-triphosphate + ADP</text>
        <dbReference type="Rhea" id="RHEA:18113"/>
        <dbReference type="ChEBI" id="CHEBI:30616"/>
        <dbReference type="ChEBI" id="CHEBI:57930"/>
        <dbReference type="ChEBI" id="CHEBI:61557"/>
        <dbReference type="ChEBI" id="CHEBI:456216"/>
        <dbReference type="EC" id="2.7.4.6"/>
    </reaction>
</comment>
<comment type="cofactor">
    <cofactor evidence="1">
        <name>Mg(2+)</name>
        <dbReference type="ChEBI" id="CHEBI:18420"/>
    </cofactor>
</comment>
<comment type="subunit">
    <text evidence="1">Homotetramer.</text>
</comment>
<comment type="subcellular location">
    <subcellularLocation>
        <location evidence="1">Cytoplasm</location>
    </subcellularLocation>
</comment>
<comment type="similarity">
    <text evidence="1">Belongs to the NDK family.</text>
</comment>
<feature type="chain" id="PRO_1000135247" description="Nucleoside diphosphate kinase">
    <location>
        <begin position="1"/>
        <end position="149"/>
    </location>
</feature>
<feature type="active site" description="Pros-phosphohistidine intermediate" evidence="1">
    <location>
        <position position="115"/>
    </location>
</feature>
<feature type="binding site" evidence="1">
    <location>
        <position position="9"/>
    </location>
    <ligand>
        <name>ATP</name>
        <dbReference type="ChEBI" id="CHEBI:30616"/>
    </ligand>
</feature>
<feature type="binding site" evidence="1">
    <location>
        <position position="57"/>
    </location>
    <ligand>
        <name>ATP</name>
        <dbReference type="ChEBI" id="CHEBI:30616"/>
    </ligand>
</feature>
<feature type="binding site" evidence="1">
    <location>
        <position position="85"/>
    </location>
    <ligand>
        <name>ATP</name>
        <dbReference type="ChEBI" id="CHEBI:30616"/>
    </ligand>
</feature>
<feature type="binding site" evidence="1">
    <location>
        <position position="91"/>
    </location>
    <ligand>
        <name>ATP</name>
        <dbReference type="ChEBI" id="CHEBI:30616"/>
    </ligand>
</feature>
<feature type="binding site" evidence="1">
    <location>
        <position position="102"/>
    </location>
    <ligand>
        <name>ATP</name>
        <dbReference type="ChEBI" id="CHEBI:30616"/>
    </ligand>
</feature>
<feature type="binding site" evidence="1">
    <location>
        <position position="112"/>
    </location>
    <ligand>
        <name>ATP</name>
        <dbReference type="ChEBI" id="CHEBI:30616"/>
    </ligand>
</feature>